<proteinExistence type="inferred from homology"/>
<reference key="1">
    <citation type="submission" date="2005-08" db="EMBL/GenBank/DDBJ databases">
        <title>Complete sequence of Synechococcus sp. CC9902.</title>
        <authorList>
            <person name="Copeland A."/>
            <person name="Lucas S."/>
            <person name="Lapidus A."/>
            <person name="Barry K."/>
            <person name="Detter J.C."/>
            <person name="Glavina T."/>
            <person name="Hammon N."/>
            <person name="Israni S."/>
            <person name="Pitluck S."/>
            <person name="Martinez M."/>
            <person name="Schmutz J."/>
            <person name="Larimer F."/>
            <person name="Land M."/>
            <person name="Kyrpides N."/>
            <person name="Ivanova N."/>
            <person name="Richardson P."/>
        </authorList>
    </citation>
    <scope>NUCLEOTIDE SEQUENCE [LARGE SCALE GENOMIC DNA]</scope>
    <source>
        <strain>CC9902</strain>
    </source>
</reference>
<protein>
    <recommendedName>
        <fullName evidence="1">Endoribonuclease YbeY</fullName>
        <ecNumber evidence="1">3.1.-.-</ecNumber>
    </recommendedName>
</protein>
<accession>Q3AUM7</accession>
<comment type="function">
    <text evidence="1">Single strand-specific metallo-endoribonuclease involved in late-stage 70S ribosome quality control and in maturation of the 3' terminus of the 16S rRNA.</text>
</comment>
<comment type="cofactor">
    <cofactor evidence="1">
        <name>Zn(2+)</name>
        <dbReference type="ChEBI" id="CHEBI:29105"/>
    </cofactor>
    <text evidence="1">Binds 1 zinc ion.</text>
</comment>
<comment type="subcellular location">
    <subcellularLocation>
        <location evidence="1">Cytoplasm</location>
    </subcellularLocation>
</comment>
<comment type="similarity">
    <text evidence="1">Belongs to the endoribonuclease YbeY family.</text>
</comment>
<feature type="chain" id="PRO_0000284334" description="Endoribonuclease YbeY">
    <location>
        <begin position="1"/>
        <end position="180"/>
    </location>
</feature>
<feature type="binding site" evidence="1">
    <location>
        <position position="136"/>
    </location>
    <ligand>
        <name>Zn(2+)</name>
        <dbReference type="ChEBI" id="CHEBI:29105"/>
        <note>catalytic</note>
    </ligand>
</feature>
<feature type="binding site" evidence="1">
    <location>
        <position position="140"/>
    </location>
    <ligand>
        <name>Zn(2+)</name>
        <dbReference type="ChEBI" id="CHEBI:29105"/>
        <note>catalytic</note>
    </ligand>
</feature>
<feature type="binding site" evidence="1">
    <location>
        <position position="146"/>
    </location>
    <ligand>
        <name>Zn(2+)</name>
        <dbReference type="ChEBI" id="CHEBI:29105"/>
        <note>catalytic</note>
    </ligand>
</feature>
<gene>
    <name evidence="1" type="primary">ybeY</name>
    <name type="ordered locus">Syncc9902_2126</name>
</gene>
<name>YBEY_SYNS9</name>
<organism>
    <name type="scientific">Synechococcus sp. (strain CC9902)</name>
    <dbReference type="NCBI Taxonomy" id="316279"/>
    <lineage>
        <taxon>Bacteria</taxon>
        <taxon>Bacillati</taxon>
        <taxon>Cyanobacteriota</taxon>
        <taxon>Cyanophyceae</taxon>
        <taxon>Synechococcales</taxon>
        <taxon>Synechococcaceae</taxon>
        <taxon>Synechococcus</taxon>
    </lineage>
</organism>
<evidence type="ECO:0000255" key="1">
    <source>
        <dbReference type="HAMAP-Rule" id="MF_00009"/>
    </source>
</evidence>
<sequence length="180" mass="19947">MELDLSLDASGVEIPEPLNGSLFAHDSWVPVLQQWIELVRSNPDLSCPSVVRQAPEVSLGLHFTNDAGIAELNSQWRQKSGPTDVLSFAALDDTPDWLEGEAVELGDIIVSVDTAQRQAQNHNHSLGYELHWLISHGLLHLLGWDHPDERRLSGMLALQERLLDSTGNVLPKGQRPVEIE</sequence>
<dbReference type="EC" id="3.1.-.-" evidence="1"/>
<dbReference type="EMBL" id="CP000097">
    <property type="protein sequence ID" value="ABB27084.1"/>
    <property type="molecule type" value="Genomic_DNA"/>
</dbReference>
<dbReference type="RefSeq" id="WP_011360866.1">
    <property type="nucleotide sequence ID" value="NC_007513.1"/>
</dbReference>
<dbReference type="SMR" id="Q3AUM7"/>
<dbReference type="STRING" id="316279.Syncc9902_2126"/>
<dbReference type="KEGG" id="sye:Syncc9902_2126"/>
<dbReference type="eggNOG" id="COG0319">
    <property type="taxonomic scope" value="Bacteria"/>
</dbReference>
<dbReference type="HOGENOM" id="CLU_106710_3_0_3"/>
<dbReference type="OrthoDB" id="9807740at2"/>
<dbReference type="Proteomes" id="UP000002712">
    <property type="component" value="Chromosome"/>
</dbReference>
<dbReference type="GO" id="GO:0005737">
    <property type="term" value="C:cytoplasm"/>
    <property type="evidence" value="ECO:0007669"/>
    <property type="project" value="UniProtKB-SubCell"/>
</dbReference>
<dbReference type="GO" id="GO:0004222">
    <property type="term" value="F:metalloendopeptidase activity"/>
    <property type="evidence" value="ECO:0007669"/>
    <property type="project" value="InterPro"/>
</dbReference>
<dbReference type="GO" id="GO:0004521">
    <property type="term" value="F:RNA endonuclease activity"/>
    <property type="evidence" value="ECO:0007669"/>
    <property type="project" value="UniProtKB-UniRule"/>
</dbReference>
<dbReference type="GO" id="GO:0008270">
    <property type="term" value="F:zinc ion binding"/>
    <property type="evidence" value="ECO:0007669"/>
    <property type="project" value="UniProtKB-UniRule"/>
</dbReference>
<dbReference type="GO" id="GO:0006364">
    <property type="term" value="P:rRNA processing"/>
    <property type="evidence" value="ECO:0007669"/>
    <property type="project" value="UniProtKB-UniRule"/>
</dbReference>
<dbReference type="Gene3D" id="3.40.390.30">
    <property type="entry name" value="Metalloproteases ('zincins'), catalytic domain"/>
    <property type="match status" value="1"/>
</dbReference>
<dbReference type="HAMAP" id="MF_00009">
    <property type="entry name" value="Endoribonucl_YbeY"/>
    <property type="match status" value="1"/>
</dbReference>
<dbReference type="InterPro" id="IPR023091">
    <property type="entry name" value="MetalPrtase_cat_dom_sf_prd"/>
</dbReference>
<dbReference type="InterPro" id="IPR002036">
    <property type="entry name" value="YbeY"/>
</dbReference>
<dbReference type="InterPro" id="IPR020549">
    <property type="entry name" value="YbeY_CS"/>
</dbReference>
<dbReference type="NCBIfam" id="TIGR00043">
    <property type="entry name" value="rRNA maturation RNase YbeY"/>
    <property type="match status" value="1"/>
</dbReference>
<dbReference type="PANTHER" id="PTHR46986">
    <property type="entry name" value="ENDORIBONUCLEASE YBEY, CHLOROPLASTIC"/>
    <property type="match status" value="1"/>
</dbReference>
<dbReference type="PANTHER" id="PTHR46986:SF1">
    <property type="entry name" value="ENDORIBONUCLEASE YBEY, CHLOROPLASTIC"/>
    <property type="match status" value="1"/>
</dbReference>
<dbReference type="Pfam" id="PF02130">
    <property type="entry name" value="YbeY"/>
    <property type="match status" value="1"/>
</dbReference>
<dbReference type="SUPFAM" id="SSF55486">
    <property type="entry name" value="Metalloproteases ('zincins'), catalytic domain"/>
    <property type="match status" value="1"/>
</dbReference>
<dbReference type="PROSITE" id="PS01306">
    <property type="entry name" value="UPF0054"/>
    <property type="match status" value="1"/>
</dbReference>
<keyword id="KW-0963">Cytoplasm</keyword>
<keyword id="KW-0255">Endonuclease</keyword>
<keyword id="KW-0378">Hydrolase</keyword>
<keyword id="KW-0479">Metal-binding</keyword>
<keyword id="KW-0540">Nuclease</keyword>
<keyword id="KW-1185">Reference proteome</keyword>
<keyword id="KW-0690">Ribosome biogenesis</keyword>
<keyword id="KW-0698">rRNA processing</keyword>
<keyword id="KW-0862">Zinc</keyword>